<accession>Q891Z8</accession>
<keyword id="KW-0067">ATP-binding</keyword>
<keyword id="KW-0963">Cytoplasm</keyword>
<keyword id="KW-0227">DNA damage</keyword>
<keyword id="KW-0233">DNA recombination</keyword>
<keyword id="KW-0234">DNA repair</keyword>
<keyword id="KW-0238">DNA-binding</keyword>
<keyword id="KW-0378">Hydrolase</keyword>
<keyword id="KW-0547">Nucleotide-binding</keyword>
<keyword id="KW-1185">Reference proteome</keyword>
<organism>
    <name type="scientific">Clostridium tetani (strain Massachusetts / E88)</name>
    <dbReference type="NCBI Taxonomy" id="212717"/>
    <lineage>
        <taxon>Bacteria</taxon>
        <taxon>Bacillati</taxon>
        <taxon>Bacillota</taxon>
        <taxon>Clostridia</taxon>
        <taxon>Eubacteriales</taxon>
        <taxon>Clostridiaceae</taxon>
        <taxon>Clostridium</taxon>
    </lineage>
</organism>
<comment type="function">
    <text evidence="1">The RuvA-RuvB-RuvC complex processes Holliday junction (HJ) DNA during genetic recombination and DNA repair, while the RuvA-RuvB complex plays an important role in the rescue of blocked DNA replication forks via replication fork reversal (RFR). RuvA specifically binds to HJ cruciform DNA, conferring on it an open structure. The RuvB hexamer acts as an ATP-dependent pump, pulling dsDNA into and through the RuvAB complex. RuvB forms 2 homohexamers on either side of HJ DNA bound by 1 or 2 RuvA tetramers; 4 subunits per hexamer contact DNA at a time. Coordinated motions by a converter formed by DNA-disengaged RuvB subunits stimulates ATP hydrolysis and nucleotide exchange. Immobilization of the converter enables RuvB to convert the ATP-contained energy into a lever motion, pulling 2 nucleotides of DNA out of the RuvA tetramer per ATP hydrolyzed, thus driving DNA branch migration. The RuvB motors rotate together with the DNA substrate, which together with the progressing nucleotide cycle form the mechanistic basis for DNA recombination by continuous HJ branch migration. Branch migration allows RuvC to scan DNA until it finds its consensus sequence, where it cleaves and resolves cruciform DNA.</text>
</comment>
<comment type="catalytic activity">
    <reaction evidence="1">
        <text>ATP + H2O = ADP + phosphate + H(+)</text>
        <dbReference type="Rhea" id="RHEA:13065"/>
        <dbReference type="ChEBI" id="CHEBI:15377"/>
        <dbReference type="ChEBI" id="CHEBI:15378"/>
        <dbReference type="ChEBI" id="CHEBI:30616"/>
        <dbReference type="ChEBI" id="CHEBI:43474"/>
        <dbReference type="ChEBI" id="CHEBI:456216"/>
    </reaction>
</comment>
<comment type="subunit">
    <text evidence="1">Homohexamer. Forms an RuvA(8)-RuvB(12)-Holliday junction (HJ) complex. HJ DNA is sandwiched between 2 RuvA tetramers; dsDNA enters through RuvA and exits via RuvB. An RuvB hexamer assembles on each DNA strand where it exits the tetramer. Each RuvB hexamer is contacted by two RuvA subunits (via domain III) on 2 adjacent RuvB subunits; this complex drives branch migration. In the full resolvosome a probable DNA-RuvA(4)-RuvB(12)-RuvC(2) complex forms which resolves the HJ.</text>
</comment>
<comment type="subcellular location">
    <subcellularLocation>
        <location evidence="1">Cytoplasm</location>
    </subcellularLocation>
</comment>
<comment type="domain">
    <text evidence="1">Has 3 domains, the large (RuvB-L) and small ATPase (RuvB-S) domains and the C-terminal head (RuvB-H) domain. The head domain binds DNA, while the ATPase domains jointly bind ATP, ADP or are empty depending on the state of the subunit in the translocation cycle. During a single DNA translocation step the structure of each domain remains the same, but their relative positions change.</text>
</comment>
<comment type="similarity">
    <text evidence="1">Belongs to the RuvB family.</text>
</comment>
<protein>
    <recommendedName>
        <fullName evidence="1">Holliday junction branch migration complex subunit RuvB</fullName>
        <ecNumber evidence="1">3.6.4.-</ecNumber>
    </recommendedName>
</protein>
<gene>
    <name evidence="1" type="primary">ruvB</name>
    <name type="ordered locus">CTC_02211</name>
</gene>
<reference key="1">
    <citation type="journal article" date="2003" name="Proc. Natl. Acad. Sci. U.S.A.">
        <title>The genome sequence of Clostridium tetani, the causative agent of tetanus disease.</title>
        <authorList>
            <person name="Brueggemann H."/>
            <person name="Baeumer S."/>
            <person name="Fricke W.F."/>
            <person name="Wiezer A."/>
            <person name="Liesegang H."/>
            <person name="Decker I."/>
            <person name="Herzberg C."/>
            <person name="Martinez-Arias R."/>
            <person name="Merkl R."/>
            <person name="Henne A."/>
            <person name="Gottschalk G."/>
        </authorList>
    </citation>
    <scope>NUCLEOTIDE SEQUENCE [LARGE SCALE GENOMIC DNA]</scope>
    <source>
        <strain>Massachusetts / E88</strain>
    </source>
</reference>
<proteinExistence type="inferred from homology"/>
<sequence length="345" mass="39197">MIILDNRFVTPLSIEEDIDIEYNLRPTQLEEYIGQSKVREKLRIFIKAAKNRGESLDHVLLYGPPGLGKTTLANIIAKEMKGNLKITSGPAIERAGDLAAILTTLNEHDVLFIDEIHRLNRAVEEILYPAMEDYALDIVIGKGAAAKSIRLDLPHFTLIGATTRVGLLTAPLRDRFGVLCPMEFYNEEELKDIIVRSSKILNVKTEEEAAYELARRSRGTPRIANRILKRVRDYSEVMGDGIIDLNMTNKALNLLEIDKEGFDSIDTKILKAILDNFNGGPVGLETLAYFIGEELDTIEDVYEPYLLQKGFIMRTPRGRVATEKTYKHFKREIKKENINQYKFKI</sequence>
<dbReference type="EC" id="3.6.4.-" evidence="1"/>
<dbReference type="EMBL" id="AE015927">
    <property type="protein sequence ID" value="AAO36697.1"/>
    <property type="molecule type" value="Genomic_DNA"/>
</dbReference>
<dbReference type="SMR" id="Q891Z8"/>
<dbReference type="STRING" id="212717.CTC_02211"/>
<dbReference type="KEGG" id="ctc:CTC_02211"/>
<dbReference type="HOGENOM" id="CLU_055599_1_0_9"/>
<dbReference type="Proteomes" id="UP000001412">
    <property type="component" value="Chromosome"/>
</dbReference>
<dbReference type="GO" id="GO:0005737">
    <property type="term" value="C:cytoplasm"/>
    <property type="evidence" value="ECO:0007669"/>
    <property type="project" value="UniProtKB-SubCell"/>
</dbReference>
<dbReference type="GO" id="GO:0048476">
    <property type="term" value="C:Holliday junction resolvase complex"/>
    <property type="evidence" value="ECO:0007669"/>
    <property type="project" value="UniProtKB-UniRule"/>
</dbReference>
<dbReference type="GO" id="GO:0005524">
    <property type="term" value="F:ATP binding"/>
    <property type="evidence" value="ECO:0007669"/>
    <property type="project" value="UniProtKB-UniRule"/>
</dbReference>
<dbReference type="GO" id="GO:0016887">
    <property type="term" value="F:ATP hydrolysis activity"/>
    <property type="evidence" value="ECO:0007669"/>
    <property type="project" value="InterPro"/>
</dbReference>
<dbReference type="GO" id="GO:0000400">
    <property type="term" value="F:four-way junction DNA binding"/>
    <property type="evidence" value="ECO:0007669"/>
    <property type="project" value="UniProtKB-UniRule"/>
</dbReference>
<dbReference type="GO" id="GO:0009378">
    <property type="term" value="F:four-way junction helicase activity"/>
    <property type="evidence" value="ECO:0007669"/>
    <property type="project" value="InterPro"/>
</dbReference>
<dbReference type="GO" id="GO:0006310">
    <property type="term" value="P:DNA recombination"/>
    <property type="evidence" value="ECO:0007669"/>
    <property type="project" value="UniProtKB-UniRule"/>
</dbReference>
<dbReference type="GO" id="GO:0006281">
    <property type="term" value="P:DNA repair"/>
    <property type="evidence" value="ECO:0007669"/>
    <property type="project" value="UniProtKB-UniRule"/>
</dbReference>
<dbReference type="CDD" id="cd00009">
    <property type="entry name" value="AAA"/>
    <property type="match status" value="1"/>
</dbReference>
<dbReference type="Gene3D" id="1.10.8.60">
    <property type="match status" value="1"/>
</dbReference>
<dbReference type="Gene3D" id="3.40.50.300">
    <property type="entry name" value="P-loop containing nucleotide triphosphate hydrolases"/>
    <property type="match status" value="1"/>
</dbReference>
<dbReference type="Gene3D" id="1.10.10.10">
    <property type="entry name" value="Winged helix-like DNA-binding domain superfamily/Winged helix DNA-binding domain"/>
    <property type="match status" value="1"/>
</dbReference>
<dbReference type="HAMAP" id="MF_00016">
    <property type="entry name" value="DNA_HJ_migration_RuvB"/>
    <property type="match status" value="1"/>
</dbReference>
<dbReference type="InterPro" id="IPR003593">
    <property type="entry name" value="AAA+_ATPase"/>
</dbReference>
<dbReference type="InterPro" id="IPR041445">
    <property type="entry name" value="AAA_lid_4"/>
</dbReference>
<dbReference type="InterPro" id="IPR004605">
    <property type="entry name" value="DNA_helicase_Holl-junc_RuvB"/>
</dbReference>
<dbReference type="InterPro" id="IPR027417">
    <property type="entry name" value="P-loop_NTPase"/>
</dbReference>
<dbReference type="InterPro" id="IPR008824">
    <property type="entry name" value="RuvB-like_N"/>
</dbReference>
<dbReference type="InterPro" id="IPR008823">
    <property type="entry name" value="RuvB_C"/>
</dbReference>
<dbReference type="InterPro" id="IPR036388">
    <property type="entry name" value="WH-like_DNA-bd_sf"/>
</dbReference>
<dbReference type="InterPro" id="IPR036390">
    <property type="entry name" value="WH_DNA-bd_sf"/>
</dbReference>
<dbReference type="NCBIfam" id="NF000868">
    <property type="entry name" value="PRK00080.1"/>
    <property type="match status" value="1"/>
</dbReference>
<dbReference type="NCBIfam" id="TIGR00635">
    <property type="entry name" value="ruvB"/>
    <property type="match status" value="1"/>
</dbReference>
<dbReference type="PANTHER" id="PTHR42848">
    <property type="match status" value="1"/>
</dbReference>
<dbReference type="PANTHER" id="PTHR42848:SF1">
    <property type="entry name" value="HOLLIDAY JUNCTION BRANCH MIGRATION COMPLEX SUBUNIT RUVB"/>
    <property type="match status" value="1"/>
</dbReference>
<dbReference type="Pfam" id="PF17864">
    <property type="entry name" value="AAA_lid_4"/>
    <property type="match status" value="1"/>
</dbReference>
<dbReference type="Pfam" id="PF05491">
    <property type="entry name" value="RuvB_C"/>
    <property type="match status" value="1"/>
</dbReference>
<dbReference type="Pfam" id="PF05496">
    <property type="entry name" value="RuvB_N"/>
    <property type="match status" value="1"/>
</dbReference>
<dbReference type="SMART" id="SM00382">
    <property type="entry name" value="AAA"/>
    <property type="match status" value="1"/>
</dbReference>
<dbReference type="SUPFAM" id="SSF52540">
    <property type="entry name" value="P-loop containing nucleoside triphosphate hydrolases"/>
    <property type="match status" value="1"/>
</dbReference>
<dbReference type="SUPFAM" id="SSF46785">
    <property type="entry name" value="Winged helix' DNA-binding domain"/>
    <property type="match status" value="1"/>
</dbReference>
<name>RUVB_CLOTE</name>
<feature type="chain" id="PRO_0000165521" description="Holliday junction branch migration complex subunit RuvB">
    <location>
        <begin position="1"/>
        <end position="345"/>
    </location>
</feature>
<feature type="region of interest" description="Large ATPase domain (RuvB-L)" evidence="1">
    <location>
        <begin position="4"/>
        <end position="185"/>
    </location>
</feature>
<feature type="region of interest" description="Small ATPAse domain (RuvB-S)" evidence="1">
    <location>
        <begin position="186"/>
        <end position="256"/>
    </location>
</feature>
<feature type="region of interest" description="Head domain (RuvB-H)" evidence="1">
    <location>
        <begin position="259"/>
        <end position="345"/>
    </location>
</feature>
<feature type="binding site" evidence="1">
    <location>
        <position position="24"/>
    </location>
    <ligand>
        <name>ATP</name>
        <dbReference type="ChEBI" id="CHEBI:30616"/>
    </ligand>
</feature>
<feature type="binding site" evidence="1">
    <location>
        <position position="25"/>
    </location>
    <ligand>
        <name>ATP</name>
        <dbReference type="ChEBI" id="CHEBI:30616"/>
    </ligand>
</feature>
<feature type="binding site" evidence="1">
    <location>
        <position position="66"/>
    </location>
    <ligand>
        <name>ATP</name>
        <dbReference type="ChEBI" id="CHEBI:30616"/>
    </ligand>
</feature>
<feature type="binding site" evidence="1">
    <location>
        <position position="69"/>
    </location>
    <ligand>
        <name>ATP</name>
        <dbReference type="ChEBI" id="CHEBI:30616"/>
    </ligand>
</feature>
<feature type="binding site" evidence="1">
    <location>
        <position position="70"/>
    </location>
    <ligand>
        <name>ATP</name>
        <dbReference type="ChEBI" id="CHEBI:30616"/>
    </ligand>
</feature>
<feature type="binding site" evidence="1">
    <location>
        <position position="70"/>
    </location>
    <ligand>
        <name>Mg(2+)</name>
        <dbReference type="ChEBI" id="CHEBI:18420"/>
    </ligand>
</feature>
<feature type="binding site" evidence="1">
    <location>
        <position position="71"/>
    </location>
    <ligand>
        <name>ATP</name>
        <dbReference type="ChEBI" id="CHEBI:30616"/>
    </ligand>
</feature>
<feature type="binding site" evidence="1">
    <location>
        <begin position="132"/>
        <end position="134"/>
    </location>
    <ligand>
        <name>ATP</name>
        <dbReference type="ChEBI" id="CHEBI:30616"/>
    </ligand>
</feature>
<feature type="binding site" evidence="1">
    <location>
        <position position="175"/>
    </location>
    <ligand>
        <name>ATP</name>
        <dbReference type="ChEBI" id="CHEBI:30616"/>
    </ligand>
</feature>
<feature type="binding site" evidence="1">
    <location>
        <position position="185"/>
    </location>
    <ligand>
        <name>ATP</name>
        <dbReference type="ChEBI" id="CHEBI:30616"/>
    </ligand>
</feature>
<feature type="binding site" evidence="1">
    <location>
        <position position="222"/>
    </location>
    <ligand>
        <name>ATP</name>
        <dbReference type="ChEBI" id="CHEBI:30616"/>
    </ligand>
</feature>
<feature type="binding site" evidence="1">
    <location>
        <position position="314"/>
    </location>
    <ligand>
        <name>DNA</name>
        <dbReference type="ChEBI" id="CHEBI:16991"/>
    </ligand>
</feature>
<feature type="binding site" evidence="1">
    <location>
        <position position="319"/>
    </location>
    <ligand>
        <name>DNA</name>
        <dbReference type="ChEBI" id="CHEBI:16991"/>
    </ligand>
</feature>
<evidence type="ECO:0000255" key="1">
    <source>
        <dbReference type="HAMAP-Rule" id="MF_00016"/>
    </source>
</evidence>